<evidence type="ECO:0000250" key="1"/>
<evidence type="ECO:0000255" key="2"/>
<evidence type="ECO:0000305" key="3"/>
<feature type="chain" id="PRO_0000213619" description="Probable glucose uptake protein GlcU">
    <location>
        <begin position="1"/>
        <end position="285"/>
    </location>
</feature>
<feature type="transmembrane region" description="Helical" evidence="2">
    <location>
        <begin position="4"/>
        <end position="21"/>
    </location>
</feature>
<feature type="transmembrane region" description="Helical" evidence="2">
    <location>
        <begin position="26"/>
        <end position="48"/>
    </location>
</feature>
<feature type="transmembrane region" description="Helical" evidence="2">
    <location>
        <begin position="52"/>
        <end position="71"/>
    </location>
</feature>
<feature type="transmembrane region" description="Helical" evidence="2">
    <location>
        <begin position="84"/>
        <end position="106"/>
    </location>
</feature>
<feature type="transmembrane region" description="Helical" evidence="2">
    <location>
        <begin position="110"/>
        <end position="132"/>
    </location>
</feature>
<feature type="transmembrane region" description="Helical" evidence="2">
    <location>
        <begin position="153"/>
        <end position="175"/>
    </location>
</feature>
<feature type="transmembrane region" description="Helical" evidence="2">
    <location>
        <begin position="180"/>
        <end position="197"/>
    </location>
</feature>
<feature type="transmembrane region" description="Helical" evidence="2">
    <location>
        <begin position="210"/>
        <end position="227"/>
    </location>
</feature>
<feature type="transmembrane region" description="Helical" evidence="2">
    <location>
        <begin position="232"/>
        <end position="254"/>
    </location>
</feature>
<feature type="transmembrane region" description="Helical" evidence="2">
    <location>
        <begin position="266"/>
        <end position="283"/>
    </location>
</feature>
<reference key="1">
    <citation type="journal article" date="2003" name="Nature">
        <title>The genome sequence of Bacillus anthracis Ames and comparison to closely related bacteria.</title>
        <authorList>
            <person name="Read T.D."/>
            <person name="Peterson S.N."/>
            <person name="Tourasse N.J."/>
            <person name="Baillie L.W."/>
            <person name="Paulsen I.T."/>
            <person name="Nelson K.E."/>
            <person name="Tettelin H."/>
            <person name="Fouts D.E."/>
            <person name="Eisen J.A."/>
            <person name="Gill S.R."/>
            <person name="Holtzapple E.K."/>
            <person name="Okstad O.A."/>
            <person name="Helgason E."/>
            <person name="Rilstone J."/>
            <person name="Wu M."/>
            <person name="Kolonay J.F."/>
            <person name="Beanan M.J."/>
            <person name="Dodson R.J."/>
            <person name="Brinkac L.M."/>
            <person name="Gwinn M.L."/>
            <person name="DeBoy R.T."/>
            <person name="Madpu R."/>
            <person name="Daugherty S.C."/>
            <person name="Durkin A.S."/>
            <person name="Haft D.H."/>
            <person name="Nelson W.C."/>
            <person name="Peterson J.D."/>
            <person name="Pop M."/>
            <person name="Khouri H.M."/>
            <person name="Radune D."/>
            <person name="Benton J.L."/>
            <person name="Mahamoud Y."/>
            <person name="Jiang L."/>
            <person name="Hance I.R."/>
            <person name="Weidman J.F."/>
            <person name="Berry K.J."/>
            <person name="Plaut R.D."/>
            <person name="Wolf A.M."/>
            <person name="Watkins K.L."/>
            <person name="Nierman W.C."/>
            <person name="Hazen A."/>
            <person name="Cline R.T."/>
            <person name="Redmond C."/>
            <person name="Thwaite J.E."/>
            <person name="White O."/>
            <person name="Salzberg S.L."/>
            <person name="Thomason B."/>
            <person name="Friedlander A.M."/>
            <person name="Koehler T.M."/>
            <person name="Hanna P.C."/>
            <person name="Kolstoe A.-B."/>
            <person name="Fraser C.M."/>
        </authorList>
    </citation>
    <scope>NUCLEOTIDE SEQUENCE [LARGE SCALE GENOMIC DNA]</scope>
    <source>
        <strain>Ames / isolate Porton</strain>
    </source>
</reference>
<reference key="2">
    <citation type="journal article" date="2009" name="J. Bacteriol.">
        <title>The complete genome sequence of Bacillus anthracis Ames 'Ancestor'.</title>
        <authorList>
            <person name="Ravel J."/>
            <person name="Jiang L."/>
            <person name="Stanley S.T."/>
            <person name="Wilson M.R."/>
            <person name="Decker R.S."/>
            <person name="Read T.D."/>
            <person name="Worsham P."/>
            <person name="Keim P.S."/>
            <person name="Salzberg S.L."/>
            <person name="Fraser-Liggett C.M."/>
            <person name="Rasko D.A."/>
        </authorList>
    </citation>
    <scope>NUCLEOTIDE SEQUENCE [LARGE SCALE GENOMIC DNA]</scope>
    <source>
        <strain>Ames ancestor</strain>
    </source>
</reference>
<reference key="3">
    <citation type="submission" date="2004-01" db="EMBL/GenBank/DDBJ databases">
        <title>Complete genome sequence of Bacillus anthracis Sterne.</title>
        <authorList>
            <person name="Brettin T.S."/>
            <person name="Bruce D."/>
            <person name="Challacombe J.F."/>
            <person name="Gilna P."/>
            <person name="Han C."/>
            <person name="Hill K."/>
            <person name="Hitchcock P."/>
            <person name="Jackson P."/>
            <person name="Keim P."/>
            <person name="Longmire J."/>
            <person name="Lucas S."/>
            <person name="Okinaka R."/>
            <person name="Richardson P."/>
            <person name="Rubin E."/>
            <person name="Tice H."/>
        </authorList>
    </citation>
    <scope>NUCLEOTIDE SEQUENCE [LARGE SCALE GENOMIC DNA]</scope>
    <source>
        <strain>Sterne</strain>
    </source>
</reference>
<gene>
    <name type="primary">glcU</name>
    <name type="ordered locus">BA_4969</name>
    <name type="ordered locus">GBAA_4969</name>
    <name type="ordered locus">BAS4613</name>
</gene>
<name>GLCU_BACAN</name>
<proteinExistence type="inferred from homology"/>
<sequence length="285" mass="30520">MDIFLAILPAIFWGSIVLFNVKLGGGPYSQTLGTTFGALIFSIVVYIFMKPVLTPTVIGVGIVSGLFWALGQANQLKSIDLMGVSRTMPISTGLQLVSTTLFGVIVFHEWSTIISVVLGVLALVCIIIGVILTSLQSEEEKNAEQAGNFKRGIIILLISTVGYLVYVVVIRLFNVDGWSALLPQAVGMVLGGILLTFKHHPFNKYAIRNIIPGLIWAAGNMFLFISQPRVGVATSFSLSQMGIIISTLGGILILGERKTKRQLTGIVVGIVFIIAAGIMLGIAKS</sequence>
<accession>Q81KM7</accession>
<accession>Q6HS29</accession>
<accession>Q6KLD3</accession>
<protein>
    <recommendedName>
        <fullName>Probable glucose uptake protein GlcU</fullName>
    </recommendedName>
</protein>
<keyword id="KW-1003">Cell membrane</keyword>
<keyword id="KW-0472">Membrane</keyword>
<keyword id="KW-1185">Reference proteome</keyword>
<keyword id="KW-0762">Sugar transport</keyword>
<keyword id="KW-0812">Transmembrane</keyword>
<keyword id="KW-1133">Transmembrane helix</keyword>
<keyword id="KW-0813">Transport</keyword>
<comment type="function">
    <text evidence="1">Involved in the uptake of glucose.</text>
</comment>
<comment type="subcellular location">
    <subcellularLocation>
        <location evidence="3">Cell membrane</location>
        <topology evidence="3">Multi-pass membrane protein</topology>
    </subcellularLocation>
</comment>
<comment type="similarity">
    <text evidence="3">Belongs to the GRP transporter (TC 2.A.7.5) family.</text>
</comment>
<organism>
    <name type="scientific">Bacillus anthracis</name>
    <dbReference type="NCBI Taxonomy" id="1392"/>
    <lineage>
        <taxon>Bacteria</taxon>
        <taxon>Bacillati</taxon>
        <taxon>Bacillota</taxon>
        <taxon>Bacilli</taxon>
        <taxon>Bacillales</taxon>
        <taxon>Bacillaceae</taxon>
        <taxon>Bacillus</taxon>
        <taxon>Bacillus cereus group</taxon>
    </lineage>
</organism>
<dbReference type="EMBL" id="AE016879">
    <property type="protein sequence ID" value="AAP28650.1"/>
    <property type="molecule type" value="Genomic_DNA"/>
</dbReference>
<dbReference type="EMBL" id="AE017334">
    <property type="protein sequence ID" value="AAT34091.1"/>
    <property type="molecule type" value="Genomic_DNA"/>
</dbReference>
<dbReference type="EMBL" id="AE017225">
    <property type="protein sequence ID" value="AAT56909.1"/>
    <property type="molecule type" value="Genomic_DNA"/>
</dbReference>
<dbReference type="RefSeq" id="NP_847164.1">
    <property type="nucleotide sequence ID" value="NC_003997.3"/>
</dbReference>
<dbReference type="RefSeq" id="WP_000350855.1">
    <property type="nucleotide sequence ID" value="NZ_WXXJ01000026.1"/>
</dbReference>
<dbReference type="RefSeq" id="YP_030859.1">
    <property type="nucleotide sequence ID" value="NC_005945.1"/>
</dbReference>
<dbReference type="SMR" id="Q81KM7"/>
<dbReference type="STRING" id="261594.GBAA_4969"/>
<dbReference type="DNASU" id="1084185"/>
<dbReference type="GeneID" id="45024587"/>
<dbReference type="KEGG" id="ban:BA_4969"/>
<dbReference type="KEGG" id="banh:HYU01_24205"/>
<dbReference type="KEGG" id="bar:GBAA_4969"/>
<dbReference type="KEGG" id="bat:BAS4613"/>
<dbReference type="PATRIC" id="fig|198094.11.peg.4929"/>
<dbReference type="eggNOG" id="COG4975">
    <property type="taxonomic scope" value="Bacteria"/>
</dbReference>
<dbReference type="HOGENOM" id="CLU_076024_0_0_9"/>
<dbReference type="OMA" id="FMFISAA"/>
<dbReference type="OrthoDB" id="1452595at2"/>
<dbReference type="Proteomes" id="UP000000427">
    <property type="component" value="Chromosome"/>
</dbReference>
<dbReference type="Proteomes" id="UP000000594">
    <property type="component" value="Chromosome"/>
</dbReference>
<dbReference type="GO" id="GO:0005886">
    <property type="term" value="C:plasma membrane"/>
    <property type="evidence" value="ECO:0007669"/>
    <property type="project" value="UniProtKB-SubCell"/>
</dbReference>
<dbReference type="GO" id="GO:0015144">
    <property type="term" value="F:carbohydrate transmembrane transporter activity"/>
    <property type="evidence" value="ECO:0007669"/>
    <property type="project" value="InterPro"/>
</dbReference>
<dbReference type="CDD" id="cd23112">
    <property type="entry name" value="glucose_uptake_GlcU"/>
    <property type="match status" value="1"/>
</dbReference>
<dbReference type="InterPro" id="IPR010651">
    <property type="entry name" value="Sugar_transport"/>
</dbReference>
<dbReference type="NCBIfam" id="TIGR00776">
    <property type="entry name" value="RhaT"/>
    <property type="match status" value="1"/>
</dbReference>
<dbReference type="PANTHER" id="PTHR16119">
    <property type="entry name" value="TRANSMEMBRANE PROTEIN 144"/>
    <property type="match status" value="1"/>
</dbReference>
<dbReference type="PANTHER" id="PTHR16119:SF17">
    <property type="entry name" value="TRANSMEMBRANE PROTEIN 144"/>
    <property type="match status" value="1"/>
</dbReference>
<dbReference type="Pfam" id="PF06800">
    <property type="entry name" value="Sugar_transport"/>
    <property type="match status" value="1"/>
</dbReference>
<dbReference type="SUPFAM" id="SSF103481">
    <property type="entry name" value="Multidrug resistance efflux transporter EmrE"/>
    <property type="match status" value="2"/>
</dbReference>